<dbReference type="EMBL" id="X17403">
    <property type="protein sequence ID" value="CAA35265.1"/>
    <property type="molecule type" value="Genomic_DNA"/>
</dbReference>
<dbReference type="EMBL" id="X04650">
    <property type="protein sequence ID" value="CAA28345.1"/>
    <property type="molecule type" value="Genomic_DNA"/>
</dbReference>
<dbReference type="EMBL" id="BK000394">
    <property type="protein sequence ID" value="DAA00221.1"/>
    <property type="molecule type" value="Genomic_DNA"/>
</dbReference>
<dbReference type="PIR" id="A27349">
    <property type="entry name" value="QQBEE1"/>
</dbReference>
<dbReference type="Proteomes" id="UP000008991">
    <property type="component" value="Segment"/>
</dbReference>
<dbReference type="Proteomes" id="UP000008992">
    <property type="component" value="Segment"/>
</dbReference>
<feature type="signal peptide" evidence="1">
    <location>
        <begin position="1"/>
        <end position="22"/>
    </location>
</feature>
<feature type="chain" id="PRO_0000115294" description="Protein US34">
    <location>
        <begin position="23"/>
        <end position="163"/>
    </location>
</feature>
<sequence>MNLEQLINVLGLLVWIAARAVSRVGPHGSGLVYRELHDFYGYLQLDLLGPVVAGNRSVRTWREQADRARGTFAWRSGLNTSRILPVGSMYRGSDALPAGLYRPEEEVFLLLNRCHGPLSTPKNACLAEVGVANATFLSRFNVGDFHGASWENGTAPDGEPGVC</sequence>
<organismHost>
    <name type="scientific">Homo sapiens</name>
    <name type="common">Human</name>
    <dbReference type="NCBI Taxonomy" id="9606"/>
</organismHost>
<organism>
    <name type="scientific">Human cytomegalovirus (strain AD169)</name>
    <name type="common">HHV-5</name>
    <name type="synonym">Human herpesvirus 5</name>
    <dbReference type="NCBI Taxonomy" id="10360"/>
    <lineage>
        <taxon>Viruses</taxon>
        <taxon>Duplodnaviria</taxon>
        <taxon>Heunggongvirae</taxon>
        <taxon>Peploviricota</taxon>
        <taxon>Herviviricetes</taxon>
        <taxon>Herpesvirales</taxon>
        <taxon>Orthoherpesviridae</taxon>
        <taxon>Betaherpesvirinae</taxon>
        <taxon>Cytomegalovirus</taxon>
        <taxon>Cytomegalovirus humanbeta5</taxon>
        <taxon>Human cytomegalovirus</taxon>
    </lineage>
</organism>
<reference key="1">
    <citation type="journal article" date="1986" name="J. Mol. Biol.">
        <title>Sequence of the short unique region, short repeats, and part of the long repeats of human cytomegalovirus.</title>
        <authorList>
            <person name="Weston K.M."/>
            <person name="Barrell B.G."/>
        </authorList>
    </citation>
    <scope>NUCLEOTIDE SEQUENCE [GENOMIC DNA]</scope>
</reference>
<reference key="2">
    <citation type="journal article" date="1990" name="Curr. Top. Microbiol. Immunol.">
        <title>Analysis of the protein-coding content of the sequence of human cytomegalovirus strain AD169.</title>
        <authorList>
            <person name="Chee M.S."/>
            <person name="Bankier A.T."/>
            <person name="Beck S."/>
            <person name="Bohni R."/>
            <person name="Brown C.M."/>
            <person name="Cerny R."/>
            <person name="Horsnell T."/>
            <person name="Hutchison C.A. III"/>
            <person name="Kouzarides T."/>
            <person name="Martignetti J.A."/>
            <person name="Preddie E."/>
            <person name="Satchwell S.C."/>
            <person name="Tomlinson P."/>
            <person name="Weston K.M."/>
            <person name="Barrell B.G."/>
        </authorList>
    </citation>
    <scope>NUCLEOTIDE SEQUENCE [LARGE SCALE GENOMIC DNA]</scope>
</reference>
<reference key="3">
    <citation type="journal article" date="2003" name="J. Gen. Virol.">
        <title>The human cytomegalovirus genome revisited: comparison with the chimpanzee cytomegalovirus genome.</title>
        <authorList>
            <person name="Davison A.J."/>
            <person name="Dolan A."/>
            <person name="Akter P."/>
            <person name="Addison C."/>
            <person name="Dargan D.J."/>
            <person name="Alcendor D.J."/>
            <person name="McGeoch D.J."/>
            <person name="Hayward G.S."/>
        </authorList>
    </citation>
    <scope>GENOME REANNOTATION</scope>
</reference>
<reference key="4">
    <citation type="journal article" date="2003" name="J. Gen. Virol.">
        <authorList>
            <person name="Davison A.J."/>
            <person name="Dolan A."/>
            <person name="Akter P."/>
            <person name="Addison C."/>
            <person name="Dargan D.J."/>
            <person name="Alcendor D.J."/>
            <person name="McGeoch D.J."/>
            <person name="Hayward G.S."/>
        </authorList>
    </citation>
    <scope>ERRATUM OF PUBMED:12533697</scope>
</reference>
<name>US34_HCMVA</name>
<protein>
    <recommendedName>
        <fullName>Protein US34</fullName>
    </recommendedName>
</protein>
<comment type="similarity">
    <text evidence="2">Belongs to the HHV-5 US34 protein family.</text>
</comment>
<gene>
    <name type="primary">US34</name>
</gene>
<accession>P09709</accession>
<accession>Q7M6G7</accession>
<evidence type="ECO:0000255" key="1"/>
<evidence type="ECO:0000305" key="2"/>
<proteinExistence type="inferred from homology"/>
<keyword id="KW-1185">Reference proteome</keyword>
<keyword id="KW-0732">Signal</keyword>